<feature type="chain" id="PRO_1000023997" description="Uroporphyrinogen decarboxylase">
    <location>
        <begin position="1"/>
        <end position="355"/>
    </location>
</feature>
<feature type="binding site" evidence="1">
    <location>
        <begin position="27"/>
        <end position="31"/>
    </location>
    <ligand>
        <name>substrate</name>
    </ligand>
</feature>
<feature type="binding site" evidence="1">
    <location>
        <position position="77"/>
    </location>
    <ligand>
        <name>substrate</name>
    </ligand>
</feature>
<feature type="binding site" evidence="1">
    <location>
        <position position="154"/>
    </location>
    <ligand>
        <name>substrate</name>
    </ligand>
</feature>
<feature type="binding site" evidence="1">
    <location>
        <position position="209"/>
    </location>
    <ligand>
        <name>substrate</name>
    </ligand>
</feature>
<feature type="binding site" evidence="1">
    <location>
        <position position="328"/>
    </location>
    <ligand>
        <name>substrate</name>
    </ligand>
</feature>
<feature type="site" description="Transition state stabilizer" evidence="1">
    <location>
        <position position="77"/>
    </location>
</feature>
<gene>
    <name evidence="1" type="primary">hemE</name>
    <name type="ordered locus">VIBHAR_00219</name>
</gene>
<organism>
    <name type="scientific">Vibrio campbellii (strain ATCC BAA-1116)</name>
    <dbReference type="NCBI Taxonomy" id="2902295"/>
    <lineage>
        <taxon>Bacteria</taxon>
        <taxon>Pseudomonadati</taxon>
        <taxon>Pseudomonadota</taxon>
        <taxon>Gammaproteobacteria</taxon>
        <taxon>Vibrionales</taxon>
        <taxon>Vibrionaceae</taxon>
        <taxon>Vibrio</taxon>
    </lineage>
</organism>
<comment type="function">
    <text evidence="1">Catalyzes the decarboxylation of four acetate groups of uroporphyrinogen-III to yield coproporphyrinogen-III.</text>
</comment>
<comment type="catalytic activity">
    <reaction evidence="1">
        <text>uroporphyrinogen III + 4 H(+) = coproporphyrinogen III + 4 CO2</text>
        <dbReference type="Rhea" id="RHEA:19865"/>
        <dbReference type="ChEBI" id="CHEBI:15378"/>
        <dbReference type="ChEBI" id="CHEBI:16526"/>
        <dbReference type="ChEBI" id="CHEBI:57308"/>
        <dbReference type="ChEBI" id="CHEBI:57309"/>
        <dbReference type="EC" id="4.1.1.37"/>
    </reaction>
</comment>
<comment type="pathway">
    <text evidence="1">Porphyrin-containing compound metabolism; protoporphyrin-IX biosynthesis; coproporphyrinogen-III from 5-aminolevulinate: step 4/4.</text>
</comment>
<comment type="subunit">
    <text evidence="1">Homodimer.</text>
</comment>
<comment type="subcellular location">
    <subcellularLocation>
        <location evidence="1">Cytoplasm</location>
    </subcellularLocation>
</comment>
<comment type="similarity">
    <text evidence="1">Belongs to the uroporphyrinogen decarboxylase family.</text>
</comment>
<reference key="1">
    <citation type="submission" date="2007-08" db="EMBL/GenBank/DDBJ databases">
        <authorList>
            <consortium name="The Vibrio harveyi Genome Sequencing Project"/>
            <person name="Bassler B."/>
            <person name="Clifton S.W."/>
            <person name="Fulton L."/>
            <person name="Delehaunty K."/>
            <person name="Fronick C."/>
            <person name="Harrison M."/>
            <person name="Markivic C."/>
            <person name="Fulton R."/>
            <person name="Tin-Wollam A.-M."/>
            <person name="Shah N."/>
            <person name="Pepin K."/>
            <person name="Nash W."/>
            <person name="Thiruvilangam P."/>
            <person name="Bhonagiri V."/>
            <person name="Waters C."/>
            <person name="Tu K.C."/>
            <person name="Irgon J."/>
            <person name="Wilson R.K."/>
        </authorList>
    </citation>
    <scope>NUCLEOTIDE SEQUENCE [LARGE SCALE GENOMIC DNA]</scope>
    <source>
        <strain>ATCC BAA-1116 / BB120</strain>
    </source>
</reference>
<protein>
    <recommendedName>
        <fullName evidence="1">Uroporphyrinogen decarboxylase</fullName>
        <shortName evidence="1">UPD</shortName>
        <shortName evidence="1">URO-D</shortName>
        <ecNumber evidence="1">4.1.1.37</ecNumber>
    </recommendedName>
</protein>
<keyword id="KW-0963">Cytoplasm</keyword>
<keyword id="KW-0210">Decarboxylase</keyword>
<keyword id="KW-0456">Lyase</keyword>
<keyword id="KW-0627">Porphyrin biosynthesis</keyword>
<name>DCUP_VIBC1</name>
<accession>A7N075</accession>
<dbReference type="EC" id="4.1.1.37" evidence="1"/>
<dbReference type="EMBL" id="CP000789">
    <property type="protein sequence ID" value="ABU69259.1"/>
    <property type="molecule type" value="Genomic_DNA"/>
</dbReference>
<dbReference type="RefSeq" id="WP_005433634.1">
    <property type="nucleotide sequence ID" value="NC_022269.1"/>
</dbReference>
<dbReference type="SMR" id="A7N075"/>
<dbReference type="GeneID" id="83583543"/>
<dbReference type="KEGG" id="vha:VIBHAR_00219"/>
<dbReference type="PATRIC" id="fig|338187.25.peg.2332"/>
<dbReference type="UniPathway" id="UPA00251">
    <property type="reaction ID" value="UER00321"/>
</dbReference>
<dbReference type="Proteomes" id="UP000008152">
    <property type="component" value="Chromosome I"/>
</dbReference>
<dbReference type="GO" id="GO:0005829">
    <property type="term" value="C:cytosol"/>
    <property type="evidence" value="ECO:0007669"/>
    <property type="project" value="TreeGrafter"/>
</dbReference>
<dbReference type="GO" id="GO:0004853">
    <property type="term" value="F:uroporphyrinogen decarboxylase activity"/>
    <property type="evidence" value="ECO:0007669"/>
    <property type="project" value="UniProtKB-UniRule"/>
</dbReference>
<dbReference type="GO" id="GO:0019353">
    <property type="term" value="P:protoporphyrinogen IX biosynthetic process from glutamate"/>
    <property type="evidence" value="ECO:0007669"/>
    <property type="project" value="TreeGrafter"/>
</dbReference>
<dbReference type="CDD" id="cd00717">
    <property type="entry name" value="URO-D"/>
    <property type="match status" value="1"/>
</dbReference>
<dbReference type="FunFam" id="3.20.20.210:FF:000001">
    <property type="entry name" value="Uroporphyrinogen decarboxylase"/>
    <property type="match status" value="1"/>
</dbReference>
<dbReference type="Gene3D" id="3.20.20.210">
    <property type="match status" value="1"/>
</dbReference>
<dbReference type="HAMAP" id="MF_00218">
    <property type="entry name" value="URO_D"/>
    <property type="match status" value="1"/>
</dbReference>
<dbReference type="InterPro" id="IPR038071">
    <property type="entry name" value="UROD/MetE-like_sf"/>
</dbReference>
<dbReference type="InterPro" id="IPR006361">
    <property type="entry name" value="Uroporphyrinogen_deCO2ase_HemE"/>
</dbReference>
<dbReference type="InterPro" id="IPR000257">
    <property type="entry name" value="Uroporphyrinogen_deCOase"/>
</dbReference>
<dbReference type="NCBIfam" id="TIGR01464">
    <property type="entry name" value="hemE"/>
    <property type="match status" value="1"/>
</dbReference>
<dbReference type="PANTHER" id="PTHR21091">
    <property type="entry name" value="METHYLTETRAHYDROFOLATE:HOMOCYSTEINE METHYLTRANSFERASE RELATED"/>
    <property type="match status" value="1"/>
</dbReference>
<dbReference type="PANTHER" id="PTHR21091:SF169">
    <property type="entry name" value="UROPORPHYRINOGEN DECARBOXYLASE"/>
    <property type="match status" value="1"/>
</dbReference>
<dbReference type="Pfam" id="PF01208">
    <property type="entry name" value="URO-D"/>
    <property type="match status" value="1"/>
</dbReference>
<dbReference type="SUPFAM" id="SSF51726">
    <property type="entry name" value="UROD/MetE-like"/>
    <property type="match status" value="1"/>
</dbReference>
<dbReference type="PROSITE" id="PS00906">
    <property type="entry name" value="UROD_1"/>
    <property type="match status" value="1"/>
</dbReference>
<dbReference type="PROSITE" id="PS00907">
    <property type="entry name" value="UROD_2"/>
    <property type="match status" value="1"/>
</dbReference>
<sequence length="355" mass="39263">MTELKNDRYLRALLKEPVDYTPVWMMRQAGRYLPEYKATRAQAGDFMSLCKNAELASEVTLQPLRRFPLDAAILFSDILTIPDAMGLELRFAAGEGPVFDKPITCKADVEKIGLPDPEGELQYVMNAVRQIRKDLNGDVPLIGFSGSPWTLATYMVEGGSSKAFTKIKKMMYAEPQTLHLLLDKLADSVIEYLNAQIKAGAQSVMVFDTWGGVLTPRDYNLFSLQYMHKIVDGLIRENDGRRVPVTLFTKNGGMWLEQIAATGCDAVGLDWTINIADAKARIGDKVALQGNMDPSMLYASPERIREEVAGILEGFGDAGTGHVFNLGHGIHLDVPPENAGVFVEAVHELSKPYHK</sequence>
<proteinExistence type="inferred from homology"/>
<evidence type="ECO:0000255" key="1">
    <source>
        <dbReference type="HAMAP-Rule" id="MF_00218"/>
    </source>
</evidence>